<evidence type="ECO:0000255" key="1">
    <source>
        <dbReference type="HAMAP-Rule" id="MF_01367"/>
    </source>
</evidence>
<evidence type="ECO:0000305" key="2"/>
<accession>Q47J93</accession>
<proteinExistence type="inferred from homology"/>
<reference key="1">
    <citation type="journal article" date="2009" name="BMC Genomics">
        <title>Metabolic analysis of the soil microbe Dechloromonas aromatica str. RCB: indications of a surprisingly complex life-style and cryptic anaerobic pathways for aromatic degradation.</title>
        <authorList>
            <person name="Salinero K.K."/>
            <person name="Keller K."/>
            <person name="Feil W.S."/>
            <person name="Feil H."/>
            <person name="Trong S."/>
            <person name="Di Bartolo G."/>
            <person name="Lapidus A."/>
        </authorList>
    </citation>
    <scope>NUCLEOTIDE SEQUENCE [LARGE SCALE GENOMIC DNA]</scope>
    <source>
        <strain>RCB</strain>
    </source>
</reference>
<organism>
    <name type="scientific">Dechloromonas aromatica (strain RCB)</name>
    <dbReference type="NCBI Taxonomy" id="159087"/>
    <lineage>
        <taxon>Bacteria</taxon>
        <taxon>Pseudomonadati</taxon>
        <taxon>Pseudomonadota</taxon>
        <taxon>Betaproteobacteria</taxon>
        <taxon>Rhodocyclales</taxon>
        <taxon>Azonexaceae</taxon>
        <taxon>Dechloromonas</taxon>
    </lineage>
</organism>
<keyword id="KW-0687">Ribonucleoprotein</keyword>
<keyword id="KW-0689">Ribosomal protein</keyword>
<keyword id="KW-0694">RNA-binding</keyword>
<keyword id="KW-0699">rRNA-binding</keyword>
<comment type="function">
    <text evidence="1">Binds to 23S rRNA. Forms part of two intersubunit bridges in the 70S ribosome.</text>
</comment>
<comment type="subunit">
    <text evidence="1">Part of the 50S ribosomal subunit. Forms a cluster with proteins L3 and L19. In the 70S ribosome, L14 and L19 interact and together make contacts with the 16S rRNA in bridges B5 and B8.</text>
</comment>
<comment type="similarity">
    <text evidence="1">Belongs to the universal ribosomal protein uL14 family.</text>
</comment>
<sequence length="122" mass="13323">MIQMQTTLDVADNTGARSVMCIKVLGGSRRRYAGIGDIIKVSIKDAAPRGRVKKGDVYNAVVVRTAKGVRRPDGSLVRFDGNAAVLLNNKLEPIGTRIFGPVTRELRTERFMKIVSLAPEVL</sequence>
<feature type="chain" id="PRO_0000266475" description="Large ribosomal subunit protein uL14">
    <location>
        <begin position="1"/>
        <end position="122"/>
    </location>
</feature>
<gene>
    <name evidence="1" type="primary">rplN</name>
    <name type="ordered locus">Daro_0329</name>
</gene>
<name>RL14_DECAR</name>
<protein>
    <recommendedName>
        <fullName evidence="1">Large ribosomal subunit protein uL14</fullName>
    </recommendedName>
    <alternativeName>
        <fullName evidence="2">50S ribosomal protein L14</fullName>
    </alternativeName>
</protein>
<dbReference type="EMBL" id="CP000089">
    <property type="protein sequence ID" value="AAZ45088.1"/>
    <property type="molecule type" value="Genomic_DNA"/>
</dbReference>
<dbReference type="SMR" id="Q47J93"/>
<dbReference type="STRING" id="159087.Daro_0329"/>
<dbReference type="KEGG" id="dar:Daro_0329"/>
<dbReference type="eggNOG" id="COG0093">
    <property type="taxonomic scope" value="Bacteria"/>
</dbReference>
<dbReference type="HOGENOM" id="CLU_095071_2_1_4"/>
<dbReference type="OrthoDB" id="9806379at2"/>
<dbReference type="GO" id="GO:0022625">
    <property type="term" value="C:cytosolic large ribosomal subunit"/>
    <property type="evidence" value="ECO:0007669"/>
    <property type="project" value="TreeGrafter"/>
</dbReference>
<dbReference type="GO" id="GO:0070180">
    <property type="term" value="F:large ribosomal subunit rRNA binding"/>
    <property type="evidence" value="ECO:0007669"/>
    <property type="project" value="TreeGrafter"/>
</dbReference>
<dbReference type="GO" id="GO:0003735">
    <property type="term" value="F:structural constituent of ribosome"/>
    <property type="evidence" value="ECO:0007669"/>
    <property type="project" value="InterPro"/>
</dbReference>
<dbReference type="GO" id="GO:0006412">
    <property type="term" value="P:translation"/>
    <property type="evidence" value="ECO:0007669"/>
    <property type="project" value="UniProtKB-UniRule"/>
</dbReference>
<dbReference type="CDD" id="cd00337">
    <property type="entry name" value="Ribosomal_uL14"/>
    <property type="match status" value="1"/>
</dbReference>
<dbReference type="FunFam" id="2.40.150.20:FF:000001">
    <property type="entry name" value="50S ribosomal protein L14"/>
    <property type="match status" value="1"/>
</dbReference>
<dbReference type="Gene3D" id="2.40.150.20">
    <property type="entry name" value="Ribosomal protein L14"/>
    <property type="match status" value="1"/>
</dbReference>
<dbReference type="HAMAP" id="MF_01367">
    <property type="entry name" value="Ribosomal_uL14"/>
    <property type="match status" value="1"/>
</dbReference>
<dbReference type="InterPro" id="IPR000218">
    <property type="entry name" value="Ribosomal_uL14"/>
</dbReference>
<dbReference type="InterPro" id="IPR005745">
    <property type="entry name" value="Ribosomal_uL14_bac-type"/>
</dbReference>
<dbReference type="InterPro" id="IPR019972">
    <property type="entry name" value="Ribosomal_uL14_CS"/>
</dbReference>
<dbReference type="InterPro" id="IPR036853">
    <property type="entry name" value="Ribosomal_uL14_sf"/>
</dbReference>
<dbReference type="NCBIfam" id="TIGR01067">
    <property type="entry name" value="rplN_bact"/>
    <property type="match status" value="1"/>
</dbReference>
<dbReference type="PANTHER" id="PTHR11761">
    <property type="entry name" value="50S/60S RIBOSOMAL PROTEIN L14/L23"/>
    <property type="match status" value="1"/>
</dbReference>
<dbReference type="PANTHER" id="PTHR11761:SF3">
    <property type="entry name" value="LARGE RIBOSOMAL SUBUNIT PROTEIN UL14M"/>
    <property type="match status" value="1"/>
</dbReference>
<dbReference type="Pfam" id="PF00238">
    <property type="entry name" value="Ribosomal_L14"/>
    <property type="match status" value="1"/>
</dbReference>
<dbReference type="SMART" id="SM01374">
    <property type="entry name" value="Ribosomal_L14"/>
    <property type="match status" value="1"/>
</dbReference>
<dbReference type="SUPFAM" id="SSF50193">
    <property type="entry name" value="Ribosomal protein L14"/>
    <property type="match status" value="1"/>
</dbReference>
<dbReference type="PROSITE" id="PS00049">
    <property type="entry name" value="RIBOSOMAL_L14"/>
    <property type="match status" value="1"/>
</dbReference>